<reference key="1">
    <citation type="journal article" date="2007" name="Genome Biol.">
        <title>Characterization and modeling of the Haemophilus influenzae core and supragenomes based on the complete genomic sequences of Rd and 12 clinical nontypeable strains.</title>
        <authorList>
            <person name="Hogg J.S."/>
            <person name="Hu F.Z."/>
            <person name="Janto B."/>
            <person name="Boissy R."/>
            <person name="Hayes J."/>
            <person name="Keefe R."/>
            <person name="Post J.C."/>
            <person name="Ehrlich G.D."/>
        </authorList>
    </citation>
    <scope>NUCLEOTIDE SEQUENCE [LARGE SCALE GENOMIC DNA]</scope>
    <source>
        <strain>PittGG</strain>
    </source>
</reference>
<accession>A5UFN4</accession>
<dbReference type="EMBL" id="CP000672">
    <property type="protein sequence ID" value="ABQ99589.1"/>
    <property type="molecule type" value="Genomic_DNA"/>
</dbReference>
<dbReference type="SMR" id="A5UFN4"/>
<dbReference type="KEGG" id="hiq:CGSHiGG_02850"/>
<dbReference type="HOGENOM" id="CLU_004131_5_1_6"/>
<dbReference type="Proteomes" id="UP000001990">
    <property type="component" value="Chromosome"/>
</dbReference>
<dbReference type="GO" id="GO:0032300">
    <property type="term" value="C:mismatch repair complex"/>
    <property type="evidence" value="ECO:0007669"/>
    <property type="project" value="InterPro"/>
</dbReference>
<dbReference type="GO" id="GO:0005524">
    <property type="term" value="F:ATP binding"/>
    <property type="evidence" value="ECO:0007669"/>
    <property type="project" value="InterPro"/>
</dbReference>
<dbReference type="GO" id="GO:0016887">
    <property type="term" value="F:ATP hydrolysis activity"/>
    <property type="evidence" value="ECO:0007669"/>
    <property type="project" value="InterPro"/>
</dbReference>
<dbReference type="GO" id="GO:0140664">
    <property type="term" value="F:ATP-dependent DNA damage sensor activity"/>
    <property type="evidence" value="ECO:0007669"/>
    <property type="project" value="InterPro"/>
</dbReference>
<dbReference type="GO" id="GO:0030983">
    <property type="term" value="F:mismatched DNA binding"/>
    <property type="evidence" value="ECO:0007669"/>
    <property type="project" value="InterPro"/>
</dbReference>
<dbReference type="GO" id="GO:0006298">
    <property type="term" value="P:mismatch repair"/>
    <property type="evidence" value="ECO:0007669"/>
    <property type="project" value="UniProtKB-UniRule"/>
</dbReference>
<dbReference type="CDD" id="cd16926">
    <property type="entry name" value="HATPase_MutL-MLH-PMS-like"/>
    <property type="match status" value="1"/>
</dbReference>
<dbReference type="CDD" id="cd03482">
    <property type="entry name" value="MutL_Trans_MutL"/>
    <property type="match status" value="1"/>
</dbReference>
<dbReference type="FunFam" id="3.30.230.10:FF:000013">
    <property type="entry name" value="DNA mismatch repair endonuclease MutL"/>
    <property type="match status" value="1"/>
</dbReference>
<dbReference type="FunFam" id="3.30.565.10:FF:000003">
    <property type="entry name" value="DNA mismatch repair endonuclease MutL"/>
    <property type="match status" value="1"/>
</dbReference>
<dbReference type="Gene3D" id="3.30.230.10">
    <property type="match status" value="1"/>
</dbReference>
<dbReference type="Gene3D" id="3.30.565.10">
    <property type="entry name" value="Histidine kinase-like ATPase, C-terminal domain"/>
    <property type="match status" value="1"/>
</dbReference>
<dbReference type="Gene3D" id="3.30.1540.20">
    <property type="entry name" value="MutL, C-terminal domain, dimerisation subdomain"/>
    <property type="match status" value="1"/>
</dbReference>
<dbReference type="Gene3D" id="3.30.1370.100">
    <property type="entry name" value="MutL, C-terminal domain, regulatory subdomain"/>
    <property type="match status" value="1"/>
</dbReference>
<dbReference type="HAMAP" id="MF_00149">
    <property type="entry name" value="DNA_mis_repair"/>
    <property type="match status" value="1"/>
</dbReference>
<dbReference type="InterPro" id="IPR014762">
    <property type="entry name" value="DNA_mismatch_repair_CS"/>
</dbReference>
<dbReference type="InterPro" id="IPR020667">
    <property type="entry name" value="DNA_mismatch_repair_MutL"/>
</dbReference>
<dbReference type="InterPro" id="IPR013507">
    <property type="entry name" value="DNA_mismatch_S5_2-like"/>
</dbReference>
<dbReference type="InterPro" id="IPR036890">
    <property type="entry name" value="HATPase_C_sf"/>
</dbReference>
<dbReference type="InterPro" id="IPR002099">
    <property type="entry name" value="MutL/Mlh/PMS"/>
</dbReference>
<dbReference type="InterPro" id="IPR038973">
    <property type="entry name" value="MutL/Mlh/Pms-like"/>
</dbReference>
<dbReference type="InterPro" id="IPR014790">
    <property type="entry name" value="MutL_C"/>
</dbReference>
<dbReference type="InterPro" id="IPR042120">
    <property type="entry name" value="MutL_C_dimsub"/>
</dbReference>
<dbReference type="InterPro" id="IPR042121">
    <property type="entry name" value="MutL_C_regsub"/>
</dbReference>
<dbReference type="InterPro" id="IPR037198">
    <property type="entry name" value="MutL_C_sf"/>
</dbReference>
<dbReference type="InterPro" id="IPR020568">
    <property type="entry name" value="Ribosomal_Su5_D2-typ_SF"/>
</dbReference>
<dbReference type="InterPro" id="IPR014721">
    <property type="entry name" value="Ribsml_uS5_D2-typ_fold_subgr"/>
</dbReference>
<dbReference type="NCBIfam" id="TIGR00585">
    <property type="entry name" value="mutl"/>
    <property type="match status" value="1"/>
</dbReference>
<dbReference type="NCBIfam" id="NF000948">
    <property type="entry name" value="PRK00095.1-1"/>
    <property type="match status" value="1"/>
</dbReference>
<dbReference type="PANTHER" id="PTHR10073">
    <property type="entry name" value="DNA MISMATCH REPAIR PROTEIN MLH, PMS, MUTL"/>
    <property type="match status" value="1"/>
</dbReference>
<dbReference type="PANTHER" id="PTHR10073:SF12">
    <property type="entry name" value="DNA MISMATCH REPAIR PROTEIN MLH1"/>
    <property type="match status" value="1"/>
</dbReference>
<dbReference type="Pfam" id="PF01119">
    <property type="entry name" value="DNA_mis_repair"/>
    <property type="match status" value="1"/>
</dbReference>
<dbReference type="Pfam" id="PF13589">
    <property type="entry name" value="HATPase_c_3"/>
    <property type="match status" value="1"/>
</dbReference>
<dbReference type="Pfam" id="PF08676">
    <property type="entry name" value="MutL_C"/>
    <property type="match status" value="1"/>
</dbReference>
<dbReference type="SMART" id="SM01340">
    <property type="entry name" value="DNA_mis_repair"/>
    <property type="match status" value="1"/>
</dbReference>
<dbReference type="SMART" id="SM00853">
    <property type="entry name" value="MutL_C"/>
    <property type="match status" value="1"/>
</dbReference>
<dbReference type="SUPFAM" id="SSF55874">
    <property type="entry name" value="ATPase domain of HSP90 chaperone/DNA topoisomerase II/histidine kinase"/>
    <property type="match status" value="1"/>
</dbReference>
<dbReference type="SUPFAM" id="SSF118116">
    <property type="entry name" value="DNA mismatch repair protein MutL"/>
    <property type="match status" value="1"/>
</dbReference>
<dbReference type="SUPFAM" id="SSF54211">
    <property type="entry name" value="Ribosomal protein S5 domain 2-like"/>
    <property type="match status" value="1"/>
</dbReference>
<dbReference type="PROSITE" id="PS00058">
    <property type="entry name" value="DNA_MISMATCH_REPAIR_1"/>
    <property type="match status" value="1"/>
</dbReference>
<protein>
    <recommendedName>
        <fullName evidence="1">DNA mismatch repair protein MutL</fullName>
    </recommendedName>
</protein>
<sequence>MPIKILSPQLANQIAAGEVVERPASVVKELVENSLDAGANKIQIDIENGGANLIRIRDNGCGIPKEELSLALARHATSKIADLDDLEAILSLGFRGEALASISSVSRLTLTSRTEEQTEAWQVYAQGRDMETTIKPASHPVGTTVEVANLFFNTPARRKFLRTDKTEFAHIDEVIRRIALTKFNTAFTLTHNGKIIRQYRPAEELNQQLKRVAAICGDDFVKNALRIDWKHDDLHLSGWVAKPNFSRTQNDLSYCYINGRMVRDKVISHAIRQAYAQYLPTDAYPAFVLFIDLNPHDVDVNVHPTKHEVRFHQQRLIHDFIYEGISYALNNQEQLNWHTDQSAVENHEENTVREPQPNYSIRPNRAAAGQNSFAPQYHEKPQQNQPHFSNTPVFPNHVSTGYRDYRSDAPSKIEQRLYAELLRTLPPTAQKDISDTAQQNISDTAKIISTEIIECSSHLRALSLIENRALLLQQNQDFFLLSLEKLQRLQWQLALKQIQIEQQPLLIPIVFRLTEAQFQAWQQYSDNFKKIGFEFIENQAQLRLTLNKVPSALRTQNLQKCVMAMLTRDENSSSFLTALCAQLECKTFNTLADALNLLSETERLLTQTNRTAFTQLLKPVNWQPLLDEI</sequence>
<keyword id="KW-0227">DNA damage</keyword>
<keyword id="KW-0234">DNA repair</keyword>
<organism>
    <name type="scientific">Haemophilus influenzae (strain PittGG)</name>
    <dbReference type="NCBI Taxonomy" id="374931"/>
    <lineage>
        <taxon>Bacteria</taxon>
        <taxon>Pseudomonadati</taxon>
        <taxon>Pseudomonadota</taxon>
        <taxon>Gammaproteobacteria</taxon>
        <taxon>Pasteurellales</taxon>
        <taxon>Pasteurellaceae</taxon>
        <taxon>Haemophilus</taxon>
    </lineage>
</organism>
<evidence type="ECO:0000255" key="1">
    <source>
        <dbReference type="HAMAP-Rule" id="MF_00149"/>
    </source>
</evidence>
<proteinExistence type="inferred from homology"/>
<comment type="function">
    <text evidence="1">This protein is involved in the repair of mismatches in DNA. It is required for dam-dependent methyl-directed DNA mismatch repair. May act as a 'molecular matchmaker', a protein that promotes the formation of a stable complex between two or more DNA-binding proteins in an ATP-dependent manner without itself being part of a final effector complex.</text>
</comment>
<comment type="similarity">
    <text evidence="1">Belongs to the DNA mismatch repair MutL/HexB family.</text>
</comment>
<feature type="chain" id="PRO_1000010022" description="DNA mismatch repair protein MutL">
    <location>
        <begin position="1"/>
        <end position="629"/>
    </location>
</feature>
<gene>
    <name evidence="1" type="primary">mutL</name>
    <name type="ordered locus">CGSHiGG_02850</name>
</gene>
<name>MUTL_HAEIG</name>